<feature type="transit peptide" description="Mitochondrion" evidence="2">
    <location>
        <begin position="1"/>
        <end position="46"/>
    </location>
</feature>
<feature type="chain" id="PRO_0000213484" description="MYG1 exonuclease">
    <location>
        <begin position="47"/>
        <end position="380"/>
    </location>
</feature>
<feature type="modified residue" description="N6-acetyllysine" evidence="1">
    <location>
        <position position="266"/>
    </location>
</feature>
<feature type="modified residue" description="N6-acetyllysine" evidence="9">
    <location>
        <position position="272"/>
    </location>
</feature>
<sequence>MGRRFLRGILTLPLRSVLQAQHRMLGSEQDPPAKRPRNNLMAPPRIGTHNGTFHCDEALACALLRLLPEYANAEIVRTRDPEKLASCDIVVDVGGEYNPQSHRYDHHQRTFTETMSSLCPGKPWQTKLSSAGLVYLHFGRKLLAQLLGTSEEDSVVDTIYDKMYENFVEEVDAVDNGISQWAEGEPRYAMTTTLSARVARLNPTWNQPNQDTEAGFRRAMDLVQEEFLQRLNFYQHSWLPARALVEEALAQRFKVDSSGEIVELAKGGCPWKEHLYHLESELSPKVAITFVIYTDQAGQWRVQCVPKEPHSFQSRLPLPEPWRGLRDKALDQVSGIPGCIFVHASGFIGGHHTREGALNMARATLAQRPAPVPLANAVVQ</sequence>
<keyword id="KW-0007">Acetylation</keyword>
<keyword id="KW-0378">Hydrolase</keyword>
<keyword id="KW-0496">Mitochondrion</keyword>
<keyword id="KW-0540">Nuclease</keyword>
<keyword id="KW-0539">Nucleus</keyword>
<keyword id="KW-1185">Reference proteome</keyword>
<keyword id="KW-0809">Transit peptide</keyword>
<evidence type="ECO:0000250" key="1">
    <source>
        <dbReference type="UniProtKB" id="Q9HB07"/>
    </source>
</evidence>
<evidence type="ECO:0000255" key="2"/>
<evidence type="ECO:0000269" key="3">
    <source>
    </source>
</evidence>
<evidence type="ECO:0000269" key="4">
    <source>
    </source>
</evidence>
<evidence type="ECO:0000269" key="5">
    <source>
    </source>
</evidence>
<evidence type="ECO:0000303" key="6">
    <source>
    </source>
</evidence>
<evidence type="ECO:0000305" key="7"/>
<evidence type="ECO:0000312" key="8">
    <source>
        <dbReference type="MGI" id="MGI:1929864"/>
    </source>
</evidence>
<evidence type="ECO:0007744" key="9">
    <source>
    </source>
</evidence>
<protein>
    <recommendedName>
        <fullName evidence="7">MYG1 exonuclease</fullName>
        <ecNumber evidence="6">3.1.-.-</ecNumber>
    </recommendedName>
    <alternativeName>
        <fullName>Protein Gamm1</fullName>
    </alternativeName>
</protein>
<name>MYG1_MOUSE</name>
<dbReference type="EC" id="3.1.-.-" evidence="6"/>
<dbReference type="EMBL" id="AF252871">
    <property type="protein sequence ID" value="AAF64518.1"/>
    <property type="molecule type" value="mRNA"/>
</dbReference>
<dbReference type="EMBL" id="AF289484">
    <property type="protein sequence ID" value="AAG17846.1"/>
    <property type="molecule type" value="mRNA"/>
</dbReference>
<dbReference type="EMBL" id="AK004104">
    <property type="protein sequence ID" value="BAB23171.1"/>
    <property type="molecule type" value="mRNA"/>
</dbReference>
<dbReference type="EMBL" id="AK013232">
    <property type="status" value="NOT_ANNOTATED_CDS"/>
    <property type="molecule type" value="mRNA"/>
</dbReference>
<dbReference type="CCDS" id="CCDS27879.1"/>
<dbReference type="RefSeq" id="NP_068359.1">
    <property type="nucleotide sequence ID" value="NM_021713.2"/>
</dbReference>
<dbReference type="BioGRID" id="208549">
    <property type="interactions" value="5"/>
</dbReference>
<dbReference type="FunCoup" id="Q9JK81">
    <property type="interactions" value="4947"/>
</dbReference>
<dbReference type="STRING" id="10090.ENSMUSP00000109312"/>
<dbReference type="GlyGen" id="Q9JK81">
    <property type="glycosylation" value="2 sites, 1 N-linked glycan (1 site), 1 O-linked glycan (1 site)"/>
</dbReference>
<dbReference type="iPTMnet" id="Q9JK81"/>
<dbReference type="PhosphoSitePlus" id="Q9JK81"/>
<dbReference type="SwissPalm" id="Q9JK81"/>
<dbReference type="jPOST" id="Q9JK81"/>
<dbReference type="PaxDb" id="10090-ENSMUSP00000109312"/>
<dbReference type="PeptideAtlas" id="Q9JK81"/>
<dbReference type="ProteomicsDB" id="293594"/>
<dbReference type="Pumba" id="Q9JK81"/>
<dbReference type="Antibodypedia" id="48361">
    <property type="antibodies" value="37 antibodies from 12 providers"/>
</dbReference>
<dbReference type="DNASU" id="60315"/>
<dbReference type="Ensembl" id="ENSMUST00000113682.9">
    <property type="protein sequence ID" value="ENSMUSP00000109312.3"/>
    <property type="gene ID" value="ENSMUSG00000001285.13"/>
</dbReference>
<dbReference type="GeneID" id="60315"/>
<dbReference type="KEGG" id="mmu:60315"/>
<dbReference type="UCSC" id="uc007xvi.1">
    <property type="organism name" value="mouse"/>
</dbReference>
<dbReference type="AGR" id="MGI:1929864"/>
<dbReference type="CTD" id="60314"/>
<dbReference type="MGI" id="MGI:1929864">
    <property type="gene designation" value="Myg1"/>
</dbReference>
<dbReference type="VEuPathDB" id="HostDB:ENSMUSG00000001285"/>
<dbReference type="eggNOG" id="KOG2948">
    <property type="taxonomic scope" value="Eukaryota"/>
</dbReference>
<dbReference type="GeneTree" id="ENSGT00390000010265"/>
<dbReference type="InParanoid" id="Q9JK81"/>
<dbReference type="OMA" id="FHCDEVV"/>
<dbReference type="OrthoDB" id="10265310at2759"/>
<dbReference type="PhylomeDB" id="Q9JK81"/>
<dbReference type="TreeFam" id="TF313313"/>
<dbReference type="BioGRID-ORCS" id="60315">
    <property type="hits" value="0 hits in 77 CRISPR screens"/>
</dbReference>
<dbReference type="ChiTaRS" id="Myg1">
    <property type="organism name" value="mouse"/>
</dbReference>
<dbReference type="PRO" id="PR:Q9JK81"/>
<dbReference type="Proteomes" id="UP000000589">
    <property type="component" value="Chromosome 15"/>
</dbReference>
<dbReference type="RNAct" id="Q9JK81">
    <property type="molecule type" value="protein"/>
</dbReference>
<dbReference type="Bgee" id="ENSMUSG00000001285">
    <property type="expression patterns" value="Expressed in saccule of membranous labyrinth and 250 other cell types or tissues"/>
</dbReference>
<dbReference type="ExpressionAtlas" id="Q9JK81">
    <property type="expression patterns" value="baseline and differential"/>
</dbReference>
<dbReference type="GO" id="GO:0005759">
    <property type="term" value="C:mitochondrial matrix"/>
    <property type="evidence" value="ECO:0007669"/>
    <property type="project" value="UniProtKB-SubCell"/>
</dbReference>
<dbReference type="GO" id="GO:0005739">
    <property type="term" value="C:mitochondrion"/>
    <property type="evidence" value="ECO:0000250"/>
    <property type="project" value="UniProtKB"/>
</dbReference>
<dbReference type="GO" id="GO:0005730">
    <property type="term" value="C:nucleolus"/>
    <property type="evidence" value="ECO:0007669"/>
    <property type="project" value="UniProtKB-SubCell"/>
</dbReference>
<dbReference type="GO" id="GO:0005654">
    <property type="term" value="C:nucleoplasm"/>
    <property type="evidence" value="ECO:0007669"/>
    <property type="project" value="UniProtKB-SubCell"/>
</dbReference>
<dbReference type="GO" id="GO:0005634">
    <property type="term" value="C:nucleus"/>
    <property type="evidence" value="ECO:0000250"/>
    <property type="project" value="UniProtKB"/>
</dbReference>
<dbReference type="GO" id="GO:0000175">
    <property type="term" value="F:3'-5'-RNA exonuclease activity"/>
    <property type="evidence" value="ECO:0007669"/>
    <property type="project" value="Ensembl"/>
</dbReference>
<dbReference type="GO" id="GO:0035641">
    <property type="term" value="P:locomotory exploration behavior"/>
    <property type="evidence" value="ECO:0000315"/>
    <property type="project" value="MGI"/>
</dbReference>
<dbReference type="GO" id="GO:0000959">
    <property type="term" value="P:mitochondrial RNA metabolic process"/>
    <property type="evidence" value="ECO:0007669"/>
    <property type="project" value="Ensembl"/>
</dbReference>
<dbReference type="GO" id="GO:0006397">
    <property type="term" value="P:mRNA processing"/>
    <property type="evidence" value="ECO:0007669"/>
    <property type="project" value="Ensembl"/>
</dbReference>
<dbReference type="GO" id="GO:0006364">
    <property type="term" value="P:rRNA processing"/>
    <property type="evidence" value="ECO:0007669"/>
    <property type="project" value="Ensembl"/>
</dbReference>
<dbReference type="InterPro" id="IPR003226">
    <property type="entry name" value="MYG1_exonuclease"/>
</dbReference>
<dbReference type="PANTHER" id="PTHR11215">
    <property type="entry name" value="METAL DEPENDENT HYDROLASE - RELATED"/>
    <property type="match status" value="1"/>
</dbReference>
<dbReference type="PANTHER" id="PTHR11215:SF1">
    <property type="entry name" value="MYG1 EXONUCLEASE"/>
    <property type="match status" value="1"/>
</dbReference>
<dbReference type="Pfam" id="PF03690">
    <property type="entry name" value="MYG1_exonuc"/>
    <property type="match status" value="1"/>
</dbReference>
<gene>
    <name evidence="8" type="primary">Myg1</name>
</gene>
<proteinExistence type="evidence at protein level"/>
<accession>Q9JK81</accession>
<accession>Q9CYX0</accession>
<organism>
    <name type="scientific">Mus musculus</name>
    <name type="common">Mouse</name>
    <dbReference type="NCBI Taxonomy" id="10090"/>
    <lineage>
        <taxon>Eukaryota</taxon>
        <taxon>Metazoa</taxon>
        <taxon>Chordata</taxon>
        <taxon>Craniata</taxon>
        <taxon>Vertebrata</taxon>
        <taxon>Euteleostomi</taxon>
        <taxon>Mammalia</taxon>
        <taxon>Eutheria</taxon>
        <taxon>Euarchontoglires</taxon>
        <taxon>Glires</taxon>
        <taxon>Rodentia</taxon>
        <taxon>Myomorpha</taxon>
        <taxon>Muroidea</taxon>
        <taxon>Muridae</taxon>
        <taxon>Murinae</taxon>
        <taxon>Mus</taxon>
        <taxon>Mus</taxon>
    </lineage>
</organism>
<comment type="function">
    <text evidence="5">3'-5' RNA exonuclease which cleaves in situ on specific transcripts in both nucleus and mitochondrion. Involved in regulating spatially segregated organellar RNA processing, acts as a coordinator of nucleo-mitochondrial crosstalk (PubMed:31081026). In nucleolus, processes pre-ribosomal RNA involved in ribosome assembly and alters cytoplasmic translation. In mitochondrial matrix, processes 3'-termini of the mito-ribosomal and messenger RNAs and controls translation of mitochondrial proteins (PubMed:31081026).</text>
</comment>
<comment type="subcellular location">
    <subcellularLocation>
        <location evidence="3 5">Nucleus</location>
        <location evidence="3 5">Nucleoplasm</location>
    </subcellularLocation>
    <subcellularLocation>
        <location evidence="3 5">Mitochondrion matrix</location>
    </subcellularLocation>
    <subcellularLocation>
        <location evidence="5">Nucleus</location>
        <location evidence="5">Nucleolus</location>
    </subcellularLocation>
</comment>
<comment type="tissue specificity">
    <text evidence="3">Ubiquitously expressed, with highest levels in testis.</text>
</comment>
<comment type="developmental stage">
    <text evidence="3">Strongly up-regulated from 7 dpc to 11 dpc. Widely expressed at 8.5 dpc. At 11.75 dpc, expression is strongest in developing neuroepithelium and eye.</text>
</comment>
<comment type="disruption phenotype">
    <text evidence="4">Mutants are vital, fertile and display no gross abnormalities. They show an inconsistent pattern of altered anxiety-like behavior. Mutant males are significantly less anxious than their wild-type littermates, females show increased anxiety in the locomotor activity arena.</text>
</comment>
<comment type="similarity">
    <text evidence="7">Belongs to the MYG1 family.</text>
</comment>
<reference key="1">
    <citation type="submission" date="2000-04" db="EMBL/GenBank/DDBJ databases">
        <title>Gamm1: cloning and characterization.</title>
        <authorList>
            <person name="Inazu T."/>
        </authorList>
    </citation>
    <scope>NUCLEOTIDE SEQUENCE [MRNA]</scope>
    <source>
        <tissue>Brain</tissue>
    </source>
</reference>
<reference key="2">
    <citation type="submission" date="2000-07" db="EMBL/GenBank/DDBJ databases">
        <title>MYG1, a highly conserved novel gene from autonomously proliferating mouse melanocytes.</title>
        <authorList>
            <person name="Smicun Y."/>
            <person name="Chang E."/>
            <person name="Halaban R."/>
        </authorList>
    </citation>
    <scope>NUCLEOTIDE SEQUENCE [MRNA]</scope>
</reference>
<reference key="3">
    <citation type="journal article" date="2005" name="Science">
        <title>The transcriptional landscape of the mammalian genome.</title>
        <authorList>
            <person name="Carninci P."/>
            <person name="Kasukawa T."/>
            <person name="Katayama S."/>
            <person name="Gough J."/>
            <person name="Frith M.C."/>
            <person name="Maeda N."/>
            <person name="Oyama R."/>
            <person name="Ravasi T."/>
            <person name="Lenhard B."/>
            <person name="Wells C."/>
            <person name="Kodzius R."/>
            <person name="Shimokawa K."/>
            <person name="Bajic V.B."/>
            <person name="Brenner S.E."/>
            <person name="Batalov S."/>
            <person name="Forrest A.R."/>
            <person name="Zavolan M."/>
            <person name="Davis M.J."/>
            <person name="Wilming L.G."/>
            <person name="Aidinis V."/>
            <person name="Allen J.E."/>
            <person name="Ambesi-Impiombato A."/>
            <person name="Apweiler R."/>
            <person name="Aturaliya R.N."/>
            <person name="Bailey T.L."/>
            <person name="Bansal M."/>
            <person name="Baxter L."/>
            <person name="Beisel K.W."/>
            <person name="Bersano T."/>
            <person name="Bono H."/>
            <person name="Chalk A.M."/>
            <person name="Chiu K.P."/>
            <person name="Choudhary V."/>
            <person name="Christoffels A."/>
            <person name="Clutterbuck D.R."/>
            <person name="Crowe M.L."/>
            <person name="Dalla E."/>
            <person name="Dalrymple B.P."/>
            <person name="de Bono B."/>
            <person name="Della Gatta G."/>
            <person name="di Bernardo D."/>
            <person name="Down T."/>
            <person name="Engstrom P."/>
            <person name="Fagiolini M."/>
            <person name="Faulkner G."/>
            <person name="Fletcher C.F."/>
            <person name="Fukushima T."/>
            <person name="Furuno M."/>
            <person name="Futaki S."/>
            <person name="Gariboldi M."/>
            <person name="Georgii-Hemming P."/>
            <person name="Gingeras T.R."/>
            <person name="Gojobori T."/>
            <person name="Green R.E."/>
            <person name="Gustincich S."/>
            <person name="Harbers M."/>
            <person name="Hayashi Y."/>
            <person name="Hensch T.K."/>
            <person name="Hirokawa N."/>
            <person name="Hill D."/>
            <person name="Huminiecki L."/>
            <person name="Iacono M."/>
            <person name="Ikeo K."/>
            <person name="Iwama A."/>
            <person name="Ishikawa T."/>
            <person name="Jakt M."/>
            <person name="Kanapin A."/>
            <person name="Katoh M."/>
            <person name="Kawasawa Y."/>
            <person name="Kelso J."/>
            <person name="Kitamura H."/>
            <person name="Kitano H."/>
            <person name="Kollias G."/>
            <person name="Krishnan S.P."/>
            <person name="Kruger A."/>
            <person name="Kummerfeld S.K."/>
            <person name="Kurochkin I.V."/>
            <person name="Lareau L.F."/>
            <person name="Lazarevic D."/>
            <person name="Lipovich L."/>
            <person name="Liu J."/>
            <person name="Liuni S."/>
            <person name="McWilliam S."/>
            <person name="Madan Babu M."/>
            <person name="Madera M."/>
            <person name="Marchionni L."/>
            <person name="Matsuda H."/>
            <person name="Matsuzawa S."/>
            <person name="Miki H."/>
            <person name="Mignone F."/>
            <person name="Miyake S."/>
            <person name="Morris K."/>
            <person name="Mottagui-Tabar S."/>
            <person name="Mulder N."/>
            <person name="Nakano N."/>
            <person name="Nakauchi H."/>
            <person name="Ng P."/>
            <person name="Nilsson R."/>
            <person name="Nishiguchi S."/>
            <person name="Nishikawa S."/>
            <person name="Nori F."/>
            <person name="Ohara O."/>
            <person name="Okazaki Y."/>
            <person name="Orlando V."/>
            <person name="Pang K.C."/>
            <person name="Pavan W.J."/>
            <person name="Pavesi G."/>
            <person name="Pesole G."/>
            <person name="Petrovsky N."/>
            <person name="Piazza S."/>
            <person name="Reed J."/>
            <person name="Reid J.F."/>
            <person name="Ring B.Z."/>
            <person name="Ringwald M."/>
            <person name="Rost B."/>
            <person name="Ruan Y."/>
            <person name="Salzberg S.L."/>
            <person name="Sandelin A."/>
            <person name="Schneider C."/>
            <person name="Schoenbach C."/>
            <person name="Sekiguchi K."/>
            <person name="Semple C.A."/>
            <person name="Seno S."/>
            <person name="Sessa L."/>
            <person name="Sheng Y."/>
            <person name="Shibata Y."/>
            <person name="Shimada H."/>
            <person name="Shimada K."/>
            <person name="Silva D."/>
            <person name="Sinclair B."/>
            <person name="Sperling S."/>
            <person name="Stupka E."/>
            <person name="Sugiura K."/>
            <person name="Sultana R."/>
            <person name="Takenaka Y."/>
            <person name="Taki K."/>
            <person name="Tammoja K."/>
            <person name="Tan S.L."/>
            <person name="Tang S."/>
            <person name="Taylor M.S."/>
            <person name="Tegner J."/>
            <person name="Teichmann S.A."/>
            <person name="Ueda H.R."/>
            <person name="van Nimwegen E."/>
            <person name="Verardo R."/>
            <person name="Wei C.L."/>
            <person name="Yagi K."/>
            <person name="Yamanishi H."/>
            <person name="Zabarovsky E."/>
            <person name="Zhu S."/>
            <person name="Zimmer A."/>
            <person name="Hide W."/>
            <person name="Bult C."/>
            <person name="Grimmond S.M."/>
            <person name="Teasdale R.D."/>
            <person name="Liu E.T."/>
            <person name="Brusic V."/>
            <person name="Quackenbush J."/>
            <person name="Wahlestedt C."/>
            <person name="Mattick J.S."/>
            <person name="Hume D.A."/>
            <person name="Kai C."/>
            <person name="Sasaki D."/>
            <person name="Tomaru Y."/>
            <person name="Fukuda S."/>
            <person name="Kanamori-Katayama M."/>
            <person name="Suzuki M."/>
            <person name="Aoki J."/>
            <person name="Arakawa T."/>
            <person name="Iida J."/>
            <person name="Imamura K."/>
            <person name="Itoh M."/>
            <person name="Kato T."/>
            <person name="Kawaji H."/>
            <person name="Kawagashira N."/>
            <person name="Kawashima T."/>
            <person name="Kojima M."/>
            <person name="Kondo S."/>
            <person name="Konno H."/>
            <person name="Nakano K."/>
            <person name="Ninomiya N."/>
            <person name="Nishio T."/>
            <person name="Okada M."/>
            <person name="Plessy C."/>
            <person name="Shibata K."/>
            <person name="Shiraki T."/>
            <person name="Suzuki S."/>
            <person name="Tagami M."/>
            <person name="Waki K."/>
            <person name="Watahiki A."/>
            <person name="Okamura-Oho Y."/>
            <person name="Suzuki H."/>
            <person name="Kawai J."/>
            <person name="Hayashizaki Y."/>
        </authorList>
    </citation>
    <scope>NUCLEOTIDE SEQUENCE [LARGE SCALE MRNA]</scope>
    <source>
        <strain>C57BL/6J</strain>
        <tissue>Embryo</tissue>
    </source>
</reference>
<reference key="4">
    <citation type="journal article" date="2009" name="Biol. Cell">
        <title>Characterization of MYG1 gene and protein: subcellular distribution and function.</title>
        <authorList>
            <person name="Philips M.-A."/>
            <person name="Vikesaa J."/>
            <person name="Luuk H."/>
            <person name="Joenson L."/>
            <person name="Lillevaeli K."/>
            <person name="Rehfeld J.F."/>
            <person name="Vasar E."/>
            <person name="Koks S."/>
            <person name="Nielsen F.C."/>
        </authorList>
    </citation>
    <scope>TISSUE SPECIFICITY</scope>
    <scope>DEVELOPMENTAL STAGE</scope>
    <scope>SUBCELLULAR LOCATION</scope>
</reference>
<reference key="5">
    <citation type="journal article" date="2010" name="Behav. Brain Res.">
        <title>Myg1-deficient mice display alterations in stress-induced responses and reduction of sex-dependent behavioral differences.</title>
        <authorList>
            <person name="Philips M.A."/>
            <person name="Abramov U."/>
            <person name="Lillevaeli K."/>
            <person name="Luuk H."/>
            <person name="Kurrikoff K."/>
            <person name="Raud S."/>
            <person name="Plaas M."/>
            <person name="Innos J."/>
            <person name="Puussaar T."/>
            <person name="Koks S."/>
            <person name="Vasar E."/>
        </authorList>
    </citation>
    <scope>DISRUPTION PHENOTYPE</scope>
</reference>
<reference key="6">
    <citation type="journal article" date="2010" name="Cell">
        <title>A tissue-specific atlas of mouse protein phosphorylation and expression.</title>
        <authorList>
            <person name="Huttlin E.L."/>
            <person name="Jedrychowski M.P."/>
            <person name="Elias J.E."/>
            <person name="Goswami T."/>
            <person name="Rad R."/>
            <person name="Beausoleil S.A."/>
            <person name="Villen J."/>
            <person name="Haas W."/>
            <person name="Sowa M.E."/>
            <person name="Gygi S.P."/>
        </authorList>
    </citation>
    <scope>IDENTIFICATION BY MASS SPECTROMETRY [LARGE SCALE ANALYSIS]</scope>
    <source>
        <tissue>Brain</tissue>
        <tissue>Brown adipose tissue</tissue>
        <tissue>Heart</tissue>
        <tissue>Kidney</tissue>
        <tissue>Liver</tissue>
        <tissue>Lung</tissue>
        <tissue>Pancreas</tissue>
        <tissue>Spleen</tissue>
        <tissue>Testis</tissue>
    </source>
</reference>
<reference key="7">
    <citation type="journal article" date="2013" name="Mol. Cell">
        <title>SIRT5-mediated lysine desuccinylation impacts diverse metabolic pathways.</title>
        <authorList>
            <person name="Park J."/>
            <person name="Chen Y."/>
            <person name="Tishkoff D.X."/>
            <person name="Peng C."/>
            <person name="Tan M."/>
            <person name="Dai L."/>
            <person name="Xie Z."/>
            <person name="Zhang Y."/>
            <person name="Zwaans B.M."/>
            <person name="Skinner M.E."/>
            <person name="Lombard D.B."/>
            <person name="Zhao Y."/>
        </authorList>
    </citation>
    <scope>ACETYLATION [LARGE SCALE ANALYSIS] AT LYS-272</scope>
    <scope>IDENTIFICATION BY MASS SPECTROMETRY [LARGE SCALE ANALYSIS]</scope>
    <source>
        <tissue>Embryonic fibroblast</tissue>
    </source>
</reference>
<reference key="8">
    <citation type="journal article" date="2019" name="Nucleic Acids Res.">
        <title>Myg1 exonuclease couples the nuclear and mitochondrial translational programs through RNA processing.</title>
        <authorList>
            <person name="Grover R."/>
            <person name="Burse S.A."/>
            <person name="Shankrit S."/>
            <person name="Aggarwal A."/>
            <person name="Kirty K."/>
            <person name="Narta K."/>
            <person name="Srivastav R."/>
            <person name="Ray A.K."/>
            <person name="Malik G."/>
            <person name="Vats A."/>
            <person name="Motiani R.K."/>
            <person name="Thukral L."/>
            <person name="Roy S.S."/>
            <person name="Bhattacharya S."/>
            <person name="Sharma R."/>
            <person name="Natarajan K."/>
            <person name="Mukerji M."/>
            <person name="Pandey R."/>
            <person name="Gokhale R.S."/>
            <person name="Natarajan V.T."/>
        </authorList>
    </citation>
    <scope>FUNCTION</scope>
    <scope>SUBCELLULAR LOCATION</scope>
</reference>